<name>Y058_HVAVE</name>
<dbReference type="EMBL" id="EF133465">
    <property type="protein sequence ID" value="ABO37244.1"/>
    <property type="molecule type" value="Genomic_DNA"/>
</dbReference>
<dbReference type="RefSeq" id="YP_001110910.1">
    <property type="nucleotide sequence ID" value="NC_009233.1"/>
</dbReference>
<dbReference type="KEGG" id="vg:5076059"/>
<dbReference type="OrthoDB" id="27147at10239"/>
<dbReference type="Proteomes" id="UP000001324">
    <property type="component" value="Genome"/>
</dbReference>
<dbReference type="GO" id="GO:0016020">
    <property type="term" value="C:membrane"/>
    <property type="evidence" value="ECO:0007669"/>
    <property type="project" value="UniProtKB-SubCell"/>
</dbReference>
<sequence length="225" mass="25002">MSLTERIGQTPKAYELANERGPFSVEVYLNPGTSNTYQYVATTRNKFNNTDYDDLPWNYTSGKKVVTATGVVSGGERYVFLLRSEIAQDIQVTMYNTNGGSNPLNNSNVTRSNVDSSSYYQQPPQVVYNNGDLYGSRTGYSGAELGASIDKGIASLWGYLKQPLVMVGIAAVVGYLIYRYYYMSRPIGFGSSGAYDVPLLDTPLLRDSYRLPQSFTRDPLFRNSV</sequence>
<reference key="1">
    <citation type="journal article" date="2007" name="J. Gen. Virol.">
        <title>Sequence and organization of the Heliothis virescens ascovirus genome.</title>
        <authorList>
            <person name="Asgari S."/>
            <person name="Davis J."/>
            <person name="Wood D."/>
            <person name="Wilson P."/>
            <person name="McGrath A."/>
        </authorList>
    </citation>
    <scope>NUCLEOTIDE SEQUENCE [LARGE SCALE GENOMIC DNA]</scope>
</reference>
<gene>
    <name type="ORF">ORF58</name>
</gene>
<feature type="chain" id="PRO_0000332716" description="Uncharacterized protein ORF58">
    <location>
        <begin position="1"/>
        <end position="225"/>
    </location>
</feature>
<feature type="transmembrane region" description="Helical" evidence="1">
    <location>
        <begin position="156"/>
        <end position="178"/>
    </location>
</feature>
<feature type="glycosylation site" description="N-linked (GlcNAc...) asparagine; by host" evidence="1">
    <location>
        <position position="48"/>
    </location>
</feature>
<feature type="glycosylation site" description="N-linked (GlcNAc...) asparagine; by host" evidence="1">
    <location>
        <position position="58"/>
    </location>
</feature>
<feature type="glycosylation site" description="N-linked (GlcNAc...) asparagine; by host" evidence="1">
    <location>
        <position position="105"/>
    </location>
</feature>
<feature type="glycosylation site" description="N-linked (GlcNAc...) asparagine; by host" evidence="1">
    <location>
        <position position="108"/>
    </location>
</feature>
<comment type="subcellular location">
    <subcellularLocation>
        <location evidence="2">Membrane</location>
        <topology evidence="2">Single-pass membrane protein</topology>
    </subcellularLocation>
</comment>
<comment type="similarity">
    <text evidence="2">Belongs to the ascovirus HvAv ORF58 family.</text>
</comment>
<organism>
    <name type="scientific">Heliothis virescens ascovirus 3e</name>
    <name type="common">HvAV-3e</name>
    <dbReference type="NCBI Taxonomy" id="260797"/>
    <lineage>
        <taxon>Viruses</taxon>
        <taxon>Varidnaviria</taxon>
        <taxon>Bamfordvirae</taxon>
        <taxon>Nucleocytoviricota</taxon>
        <taxon>Megaviricetes</taxon>
        <taxon>Pimascovirales</taxon>
        <taxon>Ascoviridae</taxon>
        <taxon>Ascovirus</taxon>
        <taxon>Ascovirus TnAV2a</taxon>
    </lineage>
</organism>
<keyword id="KW-0325">Glycoprotein</keyword>
<keyword id="KW-0472">Membrane</keyword>
<keyword id="KW-1185">Reference proteome</keyword>
<keyword id="KW-0812">Transmembrane</keyword>
<keyword id="KW-1133">Transmembrane helix</keyword>
<accession>A4KXB3</accession>
<proteinExistence type="inferred from homology"/>
<protein>
    <recommendedName>
        <fullName>Uncharacterized protein ORF58</fullName>
    </recommendedName>
</protein>
<organismHost>
    <name type="scientific">Noctuidae</name>
    <name type="common">owlet moths</name>
    <dbReference type="NCBI Taxonomy" id="7100"/>
</organismHost>
<evidence type="ECO:0000255" key="1"/>
<evidence type="ECO:0000305" key="2"/>